<dbReference type="EMBL" id="BA000022">
    <property type="protein sequence ID" value="BAA17317.1"/>
    <property type="status" value="ALT_INIT"/>
    <property type="molecule type" value="Genomic_DNA"/>
</dbReference>
<dbReference type="PIR" id="S77470">
    <property type="entry name" value="S77470"/>
</dbReference>
<dbReference type="SMR" id="P73289"/>
<dbReference type="STRING" id="1148.gene:10498180"/>
<dbReference type="PaxDb" id="1148-1652395"/>
<dbReference type="EnsemblBacteria" id="BAA17317">
    <property type="protein sequence ID" value="BAA17317"/>
    <property type="gene ID" value="BAA17317"/>
</dbReference>
<dbReference type="KEGG" id="syn:sll1824"/>
<dbReference type="eggNOG" id="COG1825">
    <property type="taxonomic scope" value="Bacteria"/>
</dbReference>
<dbReference type="InParanoid" id="P73289"/>
<dbReference type="Proteomes" id="UP000001425">
    <property type="component" value="Chromosome"/>
</dbReference>
<dbReference type="GO" id="GO:1990904">
    <property type="term" value="C:ribonucleoprotein complex"/>
    <property type="evidence" value="ECO:0007669"/>
    <property type="project" value="UniProtKB-KW"/>
</dbReference>
<dbReference type="GO" id="GO:0005840">
    <property type="term" value="C:ribosome"/>
    <property type="evidence" value="ECO:0007669"/>
    <property type="project" value="UniProtKB-KW"/>
</dbReference>
<dbReference type="GO" id="GO:0008097">
    <property type="term" value="F:5S rRNA binding"/>
    <property type="evidence" value="ECO:0007669"/>
    <property type="project" value="InterPro"/>
</dbReference>
<dbReference type="GO" id="GO:0003735">
    <property type="term" value="F:structural constituent of ribosome"/>
    <property type="evidence" value="ECO:0007669"/>
    <property type="project" value="InterPro"/>
</dbReference>
<dbReference type="GO" id="GO:0006412">
    <property type="term" value="P:translation"/>
    <property type="evidence" value="ECO:0007669"/>
    <property type="project" value="UniProtKB-UniRule"/>
</dbReference>
<dbReference type="CDD" id="cd00495">
    <property type="entry name" value="Ribosomal_L25_TL5_CTC"/>
    <property type="match status" value="1"/>
</dbReference>
<dbReference type="FunFam" id="2.40.240.10:FF:000002">
    <property type="entry name" value="50S ribosomal protein L25"/>
    <property type="match status" value="1"/>
</dbReference>
<dbReference type="Gene3D" id="2.40.240.10">
    <property type="entry name" value="Ribosomal Protein L25, Chain P"/>
    <property type="match status" value="1"/>
</dbReference>
<dbReference type="HAMAP" id="MF_01336">
    <property type="entry name" value="Ribosomal_bL25"/>
    <property type="match status" value="1"/>
</dbReference>
<dbReference type="InterPro" id="IPR020056">
    <property type="entry name" value="Rbsml_bL25/Gln-tRNA_synth_N"/>
</dbReference>
<dbReference type="InterPro" id="IPR011035">
    <property type="entry name" value="Ribosomal_bL25/Gln-tRNA_synth"/>
</dbReference>
<dbReference type="InterPro" id="IPR020055">
    <property type="entry name" value="Ribosomal_bL25_short"/>
</dbReference>
<dbReference type="InterPro" id="IPR029751">
    <property type="entry name" value="Ribosomal_L25_dom"/>
</dbReference>
<dbReference type="NCBIfam" id="NF004612">
    <property type="entry name" value="PRK05943.1"/>
    <property type="match status" value="1"/>
</dbReference>
<dbReference type="Pfam" id="PF01386">
    <property type="entry name" value="Ribosomal_L25p"/>
    <property type="match status" value="1"/>
</dbReference>
<dbReference type="SUPFAM" id="SSF50715">
    <property type="entry name" value="Ribosomal protein L25-like"/>
    <property type="match status" value="1"/>
</dbReference>
<sequence>MALSIECQQRPEKVNPRALRREGLIPATLYGHNGAESISLVVDHKTAITMLRSVTVKETPIEVKIPHLSWEGEAVVQEIQCHPWRRNLYHLAFFAGKK</sequence>
<feature type="chain" id="PRO_0000181497" description="Large ribosomal subunit protein bL25">
    <location>
        <begin position="1"/>
        <end position="98"/>
    </location>
</feature>
<name>RL25_SYNY3</name>
<protein>
    <recommendedName>
        <fullName evidence="1">Large ribosomal subunit protein bL25</fullName>
    </recommendedName>
    <alternativeName>
        <fullName evidence="2">50S ribosomal protein L25</fullName>
    </alternativeName>
</protein>
<proteinExistence type="inferred from homology"/>
<reference key="1">
    <citation type="journal article" date="1996" name="DNA Res.">
        <title>Sequence analysis of the genome of the unicellular cyanobacterium Synechocystis sp. strain PCC6803. II. Sequence determination of the entire genome and assignment of potential protein-coding regions.</title>
        <authorList>
            <person name="Kaneko T."/>
            <person name="Sato S."/>
            <person name="Kotani H."/>
            <person name="Tanaka A."/>
            <person name="Asamizu E."/>
            <person name="Nakamura Y."/>
            <person name="Miyajima N."/>
            <person name="Hirosawa M."/>
            <person name="Sugiura M."/>
            <person name="Sasamoto S."/>
            <person name="Kimura T."/>
            <person name="Hosouchi T."/>
            <person name="Matsuno A."/>
            <person name="Muraki A."/>
            <person name="Nakazaki N."/>
            <person name="Naruo K."/>
            <person name="Okumura S."/>
            <person name="Shimpo S."/>
            <person name="Takeuchi C."/>
            <person name="Wada T."/>
            <person name="Watanabe A."/>
            <person name="Yamada M."/>
            <person name="Yasuda M."/>
            <person name="Tabata S."/>
        </authorList>
    </citation>
    <scope>NUCLEOTIDE SEQUENCE [LARGE SCALE GENOMIC DNA]</scope>
    <source>
        <strain>ATCC 27184 / PCC 6803 / Kazusa</strain>
    </source>
</reference>
<reference key="2">
    <citation type="journal article" date="1998" name="Plant Cell Physiol.">
        <title>Ribosomal proteins in the cyanobacterium Anabaena variabilis strain M3: presence of L25 protein.</title>
        <authorList>
            <person name="Sato N."/>
            <person name="Wada A."/>
            <person name="Tanaka A."/>
        </authorList>
    </citation>
    <scope>DISCUSSION OF SEQUENCE</scope>
</reference>
<comment type="function">
    <text evidence="1">This is one of the proteins that binds to the 5S RNA in the ribosome where it forms part of the central protuberance.</text>
</comment>
<comment type="subunit">
    <text evidence="1">Part of the 50S ribosomal subunit; part of the 5S rRNA/L5/L18/L25 subcomplex. Contacts the 5S rRNA. Binds to the 5S rRNA independently of L5 and L18.</text>
</comment>
<comment type="similarity">
    <text evidence="1">Belongs to the bacterial ribosomal protein bL25 family.</text>
</comment>
<comment type="caution">
    <text evidence="2">This protein has been N-terminally truncated based on homology to the Anabaena variabilis ortholog.</text>
</comment>
<comment type="sequence caution" evidence="2">
    <conflict type="erroneous initiation">
        <sequence resource="EMBL-CDS" id="BAA17317"/>
    </conflict>
</comment>
<accession>P73289</accession>
<evidence type="ECO:0000255" key="1">
    <source>
        <dbReference type="HAMAP-Rule" id="MF_01336"/>
    </source>
</evidence>
<evidence type="ECO:0000305" key="2"/>
<organism>
    <name type="scientific">Synechocystis sp. (strain ATCC 27184 / PCC 6803 / Kazusa)</name>
    <dbReference type="NCBI Taxonomy" id="1111708"/>
    <lineage>
        <taxon>Bacteria</taxon>
        <taxon>Bacillati</taxon>
        <taxon>Cyanobacteriota</taxon>
        <taxon>Cyanophyceae</taxon>
        <taxon>Synechococcales</taxon>
        <taxon>Merismopediaceae</taxon>
        <taxon>Synechocystis</taxon>
    </lineage>
</organism>
<gene>
    <name evidence="1" type="primary">rplY</name>
    <name type="ordered locus">sll1824</name>
</gene>
<keyword id="KW-1185">Reference proteome</keyword>
<keyword id="KW-0687">Ribonucleoprotein</keyword>
<keyword id="KW-0689">Ribosomal protein</keyword>
<keyword id="KW-0694">RNA-binding</keyword>
<keyword id="KW-0699">rRNA-binding</keyword>